<comment type="function">
    <text evidence="1">Catalyzes the reversible conversion of 3-phosphohydroxypyruvate to phosphoserine and of 3-hydroxy-2-oxo-4-phosphonooxybutanoate to phosphohydroxythreonine.</text>
</comment>
<comment type="catalytic activity">
    <reaction evidence="1">
        <text>O-phospho-L-serine + 2-oxoglutarate = 3-phosphooxypyruvate + L-glutamate</text>
        <dbReference type="Rhea" id="RHEA:14329"/>
        <dbReference type="ChEBI" id="CHEBI:16810"/>
        <dbReference type="ChEBI" id="CHEBI:18110"/>
        <dbReference type="ChEBI" id="CHEBI:29985"/>
        <dbReference type="ChEBI" id="CHEBI:57524"/>
        <dbReference type="EC" id="2.6.1.52"/>
    </reaction>
</comment>
<comment type="catalytic activity">
    <reaction evidence="1">
        <text>4-(phosphooxy)-L-threonine + 2-oxoglutarate = (R)-3-hydroxy-2-oxo-4-phosphooxybutanoate + L-glutamate</text>
        <dbReference type="Rhea" id="RHEA:16573"/>
        <dbReference type="ChEBI" id="CHEBI:16810"/>
        <dbReference type="ChEBI" id="CHEBI:29985"/>
        <dbReference type="ChEBI" id="CHEBI:58452"/>
        <dbReference type="ChEBI" id="CHEBI:58538"/>
        <dbReference type="EC" id="2.6.1.52"/>
    </reaction>
</comment>
<comment type="cofactor">
    <cofactor evidence="1">
        <name>pyridoxal 5'-phosphate</name>
        <dbReference type="ChEBI" id="CHEBI:597326"/>
    </cofactor>
    <text evidence="1">Binds 1 pyridoxal phosphate per subunit.</text>
</comment>
<comment type="pathway">
    <text evidence="1">Amino-acid biosynthesis; L-serine biosynthesis; L-serine from 3-phospho-D-glycerate: step 2/3.</text>
</comment>
<comment type="pathway">
    <text evidence="1">Cofactor biosynthesis; pyridoxine 5'-phosphate biosynthesis; pyridoxine 5'-phosphate from D-erythrose 4-phosphate: step 3/5.</text>
</comment>
<comment type="subunit">
    <text evidence="1">Homodimer.</text>
</comment>
<comment type="subcellular location">
    <subcellularLocation>
        <location evidence="1">Cytoplasm</location>
    </subcellularLocation>
</comment>
<comment type="similarity">
    <text evidence="1">Belongs to the class-V pyridoxal-phosphate-dependent aminotransferase family. SerC subfamily.</text>
</comment>
<protein>
    <recommendedName>
        <fullName evidence="1">Phosphoserine aminotransferase</fullName>
        <ecNumber evidence="1">2.6.1.52</ecNumber>
    </recommendedName>
    <alternativeName>
        <fullName evidence="1">Phosphohydroxythreonine aminotransferase</fullName>
        <shortName evidence="1">PSAT</shortName>
    </alternativeName>
</protein>
<dbReference type="EC" id="2.6.1.52" evidence="1"/>
<dbReference type="EMBL" id="CP001164">
    <property type="protein sequence ID" value="ACI39713.1"/>
    <property type="molecule type" value="Genomic_DNA"/>
</dbReference>
<dbReference type="RefSeq" id="WP_000057165.1">
    <property type="nucleotide sequence ID" value="NC_011353.1"/>
</dbReference>
<dbReference type="SMR" id="B5YT41"/>
<dbReference type="KEGG" id="ecf:ECH74115_1068"/>
<dbReference type="HOGENOM" id="CLU_034866_0_2_6"/>
<dbReference type="UniPathway" id="UPA00135">
    <property type="reaction ID" value="UER00197"/>
</dbReference>
<dbReference type="UniPathway" id="UPA00244">
    <property type="reaction ID" value="UER00311"/>
</dbReference>
<dbReference type="GO" id="GO:0005737">
    <property type="term" value="C:cytoplasm"/>
    <property type="evidence" value="ECO:0007669"/>
    <property type="project" value="UniProtKB-SubCell"/>
</dbReference>
<dbReference type="GO" id="GO:0004648">
    <property type="term" value="F:O-phospho-L-serine:2-oxoglutarate aminotransferase activity"/>
    <property type="evidence" value="ECO:0007669"/>
    <property type="project" value="UniProtKB-UniRule"/>
</dbReference>
<dbReference type="GO" id="GO:0030170">
    <property type="term" value="F:pyridoxal phosphate binding"/>
    <property type="evidence" value="ECO:0007669"/>
    <property type="project" value="UniProtKB-UniRule"/>
</dbReference>
<dbReference type="GO" id="GO:0006564">
    <property type="term" value="P:L-serine biosynthetic process"/>
    <property type="evidence" value="ECO:0007669"/>
    <property type="project" value="UniProtKB-UniRule"/>
</dbReference>
<dbReference type="GO" id="GO:0008615">
    <property type="term" value="P:pyridoxine biosynthetic process"/>
    <property type="evidence" value="ECO:0007669"/>
    <property type="project" value="UniProtKB-UniRule"/>
</dbReference>
<dbReference type="CDD" id="cd00611">
    <property type="entry name" value="PSAT_like"/>
    <property type="match status" value="1"/>
</dbReference>
<dbReference type="FunFam" id="3.40.640.10:FF:000010">
    <property type="entry name" value="Phosphoserine aminotransferase"/>
    <property type="match status" value="1"/>
</dbReference>
<dbReference type="FunFam" id="3.90.1150.10:FF:000006">
    <property type="entry name" value="Phosphoserine aminotransferase"/>
    <property type="match status" value="1"/>
</dbReference>
<dbReference type="Gene3D" id="3.90.1150.10">
    <property type="entry name" value="Aspartate Aminotransferase, domain 1"/>
    <property type="match status" value="1"/>
</dbReference>
<dbReference type="Gene3D" id="3.40.640.10">
    <property type="entry name" value="Type I PLP-dependent aspartate aminotransferase-like (Major domain)"/>
    <property type="match status" value="1"/>
</dbReference>
<dbReference type="HAMAP" id="MF_00160">
    <property type="entry name" value="SerC_aminotrans_5"/>
    <property type="match status" value="1"/>
</dbReference>
<dbReference type="InterPro" id="IPR000192">
    <property type="entry name" value="Aminotrans_V_dom"/>
</dbReference>
<dbReference type="InterPro" id="IPR020578">
    <property type="entry name" value="Aminotrans_V_PyrdxlP_BS"/>
</dbReference>
<dbReference type="InterPro" id="IPR022278">
    <property type="entry name" value="Pser_aminoTfrase"/>
</dbReference>
<dbReference type="InterPro" id="IPR015424">
    <property type="entry name" value="PyrdxlP-dep_Trfase"/>
</dbReference>
<dbReference type="InterPro" id="IPR015421">
    <property type="entry name" value="PyrdxlP-dep_Trfase_major"/>
</dbReference>
<dbReference type="InterPro" id="IPR015422">
    <property type="entry name" value="PyrdxlP-dep_Trfase_small"/>
</dbReference>
<dbReference type="NCBIfam" id="NF003764">
    <property type="entry name" value="PRK05355.1"/>
    <property type="match status" value="1"/>
</dbReference>
<dbReference type="NCBIfam" id="TIGR01364">
    <property type="entry name" value="serC_1"/>
    <property type="match status" value="1"/>
</dbReference>
<dbReference type="PANTHER" id="PTHR43247">
    <property type="entry name" value="PHOSPHOSERINE AMINOTRANSFERASE"/>
    <property type="match status" value="1"/>
</dbReference>
<dbReference type="PANTHER" id="PTHR43247:SF1">
    <property type="entry name" value="PHOSPHOSERINE AMINOTRANSFERASE"/>
    <property type="match status" value="1"/>
</dbReference>
<dbReference type="Pfam" id="PF00266">
    <property type="entry name" value="Aminotran_5"/>
    <property type="match status" value="1"/>
</dbReference>
<dbReference type="PIRSF" id="PIRSF000525">
    <property type="entry name" value="SerC"/>
    <property type="match status" value="1"/>
</dbReference>
<dbReference type="SUPFAM" id="SSF53383">
    <property type="entry name" value="PLP-dependent transferases"/>
    <property type="match status" value="1"/>
</dbReference>
<dbReference type="PROSITE" id="PS00595">
    <property type="entry name" value="AA_TRANSFER_CLASS_5"/>
    <property type="match status" value="1"/>
</dbReference>
<feature type="chain" id="PRO_1000203522" description="Phosphoserine aminotransferase">
    <location>
        <begin position="1"/>
        <end position="362"/>
    </location>
</feature>
<feature type="binding site" evidence="1">
    <location>
        <position position="9"/>
    </location>
    <ligand>
        <name>L-glutamate</name>
        <dbReference type="ChEBI" id="CHEBI:29985"/>
    </ligand>
</feature>
<feature type="binding site" evidence="1">
    <location>
        <position position="42"/>
    </location>
    <ligand>
        <name>L-glutamate</name>
        <dbReference type="ChEBI" id="CHEBI:29985"/>
    </ligand>
</feature>
<feature type="binding site" evidence="1">
    <location>
        <begin position="76"/>
        <end position="77"/>
    </location>
    <ligand>
        <name>pyridoxal 5'-phosphate</name>
        <dbReference type="ChEBI" id="CHEBI:597326"/>
    </ligand>
</feature>
<feature type="binding site" evidence="1">
    <location>
        <position position="102"/>
    </location>
    <ligand>
        <name>pyridoxal 5'-phosphate</name>
        <dbReference type="ChEBI" id="CHEBI:597326"/>
    </ligand>
</feature>
<feature type="binding site" evidence="1">
    <location>
        <position position="153"/>
    </location>
    <ligand>
        <name>pyridoxal 5'-phosphate</name>
        <dbReference type="ChEBI" id="CHEBI:597326"/>
    </ligand>
</feature>
<feature type="binding site" evidence="1">
    <location>
        <position position="174"/>
    </location>
    <ligand>
        <name>pyridoxal 5'-phosphate</name>
        <dbReference type="ChEBI" id="CHEBI:597326"/>
    </ligand>
</feature>
<feature type="binding site" evidence="1">
    <location>
        <position position="197"/>
    </location>
    <ligand>
        <name>pyridoxal 5'-phosphate</name>
        <dbReference type="ChEBI" id="CHEBI:597326"/>
    </ligand>
</feature>
<feature type="binding site" evidence="1">
    <location>
        <begin position="239"/>
        <end position="240"/>
    </location>
    <ligand>
        <name>pyridoxal 5'-phosphate</name>
        <dbReference type="ChEBI" id="CHEBI:597326"/>
    </ligand>
</feature>
<feature type="modified residue" description="N6-(pyridoxal phosphate)lysine" evidence="1">
    <location>
        <position position="198"/>
    </location>
</feature>
<gene>
    <name evidence="1" type="primary">serC</name>
    <name type="ordered locus">ECH74115_1068</name>
</gene>
<sequence length="362" mass="39854">MAQIFNFSSGPAMLPVEVLKQAQQELRDWNGLGTSVMEVSHRGKEFIQVAEEAEKDFRDLLNVPSNYKVLFCHGGGRGQFAAVPLNILGDKTTADYVDAGYWAASAIKEAKKYCTPNVFDAKVTVDGLRAVKPMREWQLSDNAAYMHYCPNETIDGIAIDETPDFGKDVVVAADFSSTILSRPIDVSRYGVIYAGAQKNIGPAGLTIVIVREDLLGKANVACPSILDYSILNDNGSMFNTPPTFAWYLSGLVFKWLKANGGVAEMDKINQQKAELLYGVIDNSDFYRNDVAKANRSRMNVPFQLADSALDKLFLEESFAAGLHALKGHRVVGGMRASIYNAMPLEGVKALTDFMVEFERRHG</sequence>
<proteinExistence type="inferred from homology"/>
<reference key="1">
    <citation type="journal article" date="2011" name="Proc. Natl. Acad. Sci. U.S.A.">
        <title>Genomic anatomy of Escherichia coli O157:H7 outbreaks.</title>
        <authorList>
            <person name="Eppinger M."/>
            <person name="Mammel M.K."/>
            <person name="Leclerc J.E."/>
            <person name="Ravel J."/>
            <person name="Cebula T.A."/>
        </authorList>
    </citation>
    <scope>NUCLEOTIDE SEQUENCE [LARGE SCALE GENOMIC DNA]</scope>
    <source>
        <strain>EC4115 / EHEC</strain>
    </source>
</reference>
<name>SERC_ECO5E</name>
<organism>
    <name type="scientific">Escherichia coli O157:H7 (strain EC4115 / EHEC)</name>
    <dbReference type="NCBI Taxonomy" id="444450"/>
    <lineage>
        <taxon>Bacteria</taxon>
        <taxon>Pseudomonadati</taxon>
        <taxon>Pseudomonadota</taxon>
        <taxon>Gammaproteobacteria</taxon>
        <taxon>Enterobacterales</taxon>
        <taxon>Enterobacteriaceae</taxon>
        <taxon>Escherichia</taxon>
    </lineage>
</organism>
<evidence type="ECO:0000255" key="1">
    <source>
        <dbReference type="HAMAP-Rule" id="MF_00160"/>
    </source>
</evidence>
<keyword id="KW-0028">Amino-acid biosynthesis</keyword>
<keyword id="KW-0032">Aminotransferase</keyword>
<keyword id="KW-0963">Cytoplasm</keyword>
<keyword id="KW-0663">Pyridoxal phosphate</keyword>
<keyword id="KW-0664">Pyridoxine biosynthesis</keyword>
<keyword id="KW-0718">Serine biosynthesis</keyword>
<keyword id="KW-0808">Transferase</keyword>
<accession>B5YT41</accession>